<keyword id="KW-0256">Endoplasmic reticulum</keyword>
<keyword id="KW-0325">Glycoprotein</keyword>
<keyword id="KW-0472">Membrane</keyword>
<keyword id="KW-0597">Phosphoprotein</keyword>
<keyword id="KW-1185">Reference proteome</keyword>
<keyword id="KW-0732">Signal</keyword>
<keyword id="KW-0812">Transmembrane</keyword>
<keyword id="KW-1133">Transmembrane helix</keyword>
<keyword id="KW-0813">Transport</keyword>
<sequence>MQVLVTLWCLICTCLVLPVAAKKRTLTASSLVTCMENSQLSANSFDVSFSPDDRSLHYDLDMTTQIDSYIYAYVDVYAYGFKIITENFDVCSMGWKQFCPVHPGNIQIDSIEYIAQKYVKMIPGIAYQVPDIDAYVRLNIYNNVSENLACIQVFFSNGKTVSQIGVKWVTAVIAGIGLLTSAVLSTFGNSTAASHISANTMSLFLYFQSVAVVAMQHVDSVPPIAAAWSENLAWSMGLIRITFMQKIFRWYVEATGGSASLYLTATTMSVLTQRGLDYLKNTSVYKRAENVLYGNSNTLIFRGIKRMGYRMKIENTAIVCTGFTFFVLCGYFLAGFIMACKYSIELCIRCGWMRSDRFYQFRKNWRSVLKGSLLRYIYIGFTQLTILSFWEFTERDSAGVIVIACLFIVLSCGLMAWAAYRTIFFASKSVEMYNNPAALLYGDEYVLNKYGFFYTMFNAKHYWWNALLTTYILVKALFVGFAQASGKTQALAIFIIDLAYFVAIIRYKPYLDRPTNIVNIFICTVTLVNSFLFMFFSNLFNQKYAVSAIMGWVFFIMNAAFSLLLLLMILAFTTIILFSKNPDSRFKPAKDDRASFQKHAIPHEGALNKSVANELMALGNVAKDHTENWEYELKSQEGKSEDNLFGVEYDDEKTGTNSENAESSSKETTRPTFSEKVLRSLSIKRNKSKLGSFKRSAPDKITQQEVSPDRASSSPNSKSYPGVSHTRQESEANNGLINAYEDEQFSLMEPSILEDAASSTQMHAMPARDLSLSSVANAQDVTKKANILDPDYL</sequence>
<protein>
    <recommendedName>
        <fullName>Flavin carrier protein 1</fullName>
    </recommendedName>
    <alternativeName>
        <fullName>Bypass of PAM1 protein 1</fullName>
    </alternativeName>
    <alternativeName>
        <fullName>FAD transporter 1</fullName>
    </alternativeName>
    <alternativeName>
        <fullName>Heme utilization factor 1</fullName>
    </alternativeName>
    <alternativeName>
        <fullName>TRP-like ion channel protein FLC1</fullName>
    </alternativeName>
</protein>
<organism>
    <name type="scientific">Saccharomyces cerevisiae (strain ATCC 204508 / S288c)</name>
    <name type="common">Baker's yeast</name>
    <dbReference type="NCBI Taxonomy" id="559292"/>
    <lineage>
        <taxon>Eukaryota</taxon>
        <taxon>Fungi</taxon>
        <taxon>Dikarya</taxon>
        <taxon>Ascomycota</taxon>
        <taxon>Saccharomycotina</taxon>
        <taxon>Saccharomycetes</taxon>
        <taxon>Saccharomycetales</taxon>
        <taxon>Saccharomycetaceae</taxon>
        <taxon>Saccharomyces</taxon>
    </lineage>
</organism>
<feature type="signal peptide" evidence="2">
    <location>
        <begin position="1"/>
        <end position="21"/>
    </location>
</feature>
<feature type="chain" id="PRO_0000252267" description="Flavin carrier protein 1">
    <location>
        <begin position="22"/>
        <end position="793"/>
    </location>
</feature>
<feature type="topological domain" description="Lumenal" evidence="2">
    <location>
        <begin position="22"/>
        <end position="163"/>
    </location>
</feature>
<feature type="transmembrane region" description="Helical" evidence="2">
    <location>
        <begin position="164"/>
        <end position="184"/>
    </location>
</feature>
<feature type="topological domain" description="Cytoplasmic" evidence="2">
    <location>
        <begin position="185"/>
        <end position="194"/>
    </location>
</feature>
<feature type="transmembrane region" description="Helical" evidence="2">
    <location>
        <begin position="195"/>
        <end position="215"/>
    </location>
</feature>
<feature type="topological domain" description="Lumenal" evidence="2">
    <location>
        <begin position="216"/>
        <end position="223"/>
    </location>
</feature>
<feature type="transmembrane region" description="Helical" evidence="2">
    <location>
        <begin position="224"/>
        <end position="244"/>
    </location>
</feature>
<feature type="topological domain" description="Cytoplasmic" evidence="2">
    <location>
        <begin position="245"/>
        <end position="249"/>
    </location>
</feature>
<feature type="transmembrane region" description="Helical" evidence="2">
    <location>
        <begin position="250"/>
        <end position="272"/>
    </location>
</feature>
<feature type="topological domain" description="Lumenal" evidence="2">
    <location>
        <begin position="273"/>
        <end position="317"/>
    </location>
</feature>
<feature type="transmembrane region" description="Helical" evidence="2">
    <location>
        <begin position="318"/>
        <end position="338"/>
    </location>
</feature>
<feature type="topological domain" description="Cytoplasmic" evidence="2">
    <location>
        <begin position="339"/>
        <end position="372"/>
    </location>
</feature>
<feature type="transmembrane region" description="Helical" evidence="2">
    <location>
        <begin position="373"/>
        <end position="393"/>
    </location>
</feature>
<feature type="topological domain" description="Lumenal" evidence="2">
    <location>
        <begin position="394"/>
        <end position="397"/>
    </location>
</feature>
<feature type="transmembrane region" description="Helical" evidence="2">
    <location>
        <begin position="398"/>
        <end position="418"/>
    </location>
</feature>
<feature type="topological domain" description="Cytoplasmic" evidence="2">
    <location>
        <begin position="419"/>
        <end position="461"/>
    </location>
</feature>
<feature type="transmembrane region" description="Helical" evidence="2">
    <location>
        <begin position="462"/>
        <end position="482"/>
    </location>
</feature>
<feature type="topological domain" description="Lumenal" evidence="2">
    <location>
        <begin position="483"/>
        <end position="484"/>
    </location>
</feature>
<feature type="transmembrane region" description="Helical" evidence="2">
    <location>
        <begin position="485"/>
        <end position="505"/>
    </location>
</feature>
<feature type="topological domain" description="Cytoplasmic" evidence="2">
    <location>
        <begin position="506"/>
        <end position="516"/>
    </location>
</feature>
<feature type="transmembrane region" description="Helical" evidence="2">
    <location>
        <begin position="517"/>
        <end position="537"/>
    </location>
</feature>
<feature type="topological domain" description="Lumenal" evidence="2">
    <location>
        <begin position="538"/>
        <end position="551"/>
    </location>
</feature>
<feature type="transmembrane region" description="Helical" evidence="2">
    <location>
        <begin position="552"/>
        <end position="572"/>
    </location>
</feature>
<feature type="topological domain" description="Cytoplasmic" evidence="2">
    <location>
        <begin position="573"/>
        <end position="793"/>
    </location>
</feature>
<feature type="region of interest" description="Disordered" evidence="3">
    <location>
        <begin position="649"/>
        <end position="674"/>
    </location>
</feature>
<feature type="region of interest" description="Disordered" evidence="3">
    <location>
        <begin position="689"/>
        <end position="731"/>
    </location>
</feature>
<feature type="compositionally biased region" description="Polar residues" evidence="3">
    <location>
        <begin position="701"/>
        <end position="719"/>
    </location>
</feature>
<feature type="modified residue" description="Phosphoserine" evidence="1">
    <location>
        <position position="610"/>
    </location>
</feature>
<feature type="modified residue" description="Phosphothreonine" evidence="8">
    <location>
        <position position="626"/>
    </location>
</feature>
<feature type="modified residue" description="Phosphoserine" evidence="6 7 8">
    <location>
        <position position="771"/>
    </location>
</feature>
<feature type="modified residue" description="Phosphoserine" evidence="8">
    <location>
        <position position="774"/>
    </location>
</feature>
<feature type="glycosylation site" description="N-linked (GlcNAc...) asparagine" evidence="2">
    <location>
        <position position="143"/>
    </location>
</feature>
<feature type="glycosylation site" description="N-linked (GlcNAc...) asparagine" evidence="2">
    <location>
        <position position="281"/>
    </location>
</feature>
<evidence type="ECO:0000250" key="1">
    <source>
        <dbReference type="UniProtKB" id="P53121"/>
    </source>
</evidence>
<evidence type="ECO:0000255" key="2"/>
<evidence type="ECO:0000256" key="3">
    <source>
        <dbReference type="SAM" id="MobiDB-lite"/>
    </source>
</evidence>
<evidence type="ECO:0000269" key="4">
    <source>
    </source>
</evidence>
<evidence type="ECO:0000305" key="5"/>
<evidence type="ECO:0007744" key="6">
    <source>
    </source>
</evidence>
<evidence type="ECO:0007744" key="7">
    <source>
    </source>
</evidence>
<evidence type="ECO:0007744" key="8">
    <source>
    </source>
</evidence>
<accession>Q08967</accession>
<accession>D6W3E9</accession>
<gene>
    <name type="primary">FLC1</name>
    <name type="synonym">BOP1</name>
    <name type="synonym">HUF1</name>
    <name type="ordered locus">YPL221W</name>
</gene>
<proteinExistence type="evidence at protein level"/>
<name>FLC1_YEAST</name>
<reference key="1">
    <citation type="journal article" date="1997" name="Nature">
        <title>The nucleotide sequence of Saccharomyces cerevisiae chromosome XVI.</title>
        <authorList>
            <person name="Bussey H."/>
            <person name="Storms R.K."/>
            <person name="Ahmed A."/>
            <person name="Albermann K."/>
            <person name="Allen E."/>
            <person name="Ansorge W."/>
            <person name="Araujo R."/>
            <person name="Aparicio A."/>
            <person name="Barrell B.G."/>
            <person name="Badcock K."/>
            <person name="Benes V."/>
            <person name="Botstein D."/>
            <person name="Bowman S."/>
            <person name="Brueckner M."/>
            <person name="Carpenter J."/>
            <person name="Cherry J.M."/>
            <person name="Chung E."/>
            <person name="Churcher C.M."/>
            <person name="Coster F."/>
            <person name="Davis K."/>
            <person name="Davis R.W."/>
            <person name="Dietrich F.S."/>
            <person name="Delius H."/>
            <person name="DiPaolo T."/>
            <person name="Dubois E."/>
            <person name="Duesterhoeft A."/>
            <person name="Duncan M."/>
            <person name="Floeth M."/>
            <person name="Fortin N."/>
            <person name="Friesen J.D."/>
            <person name="Fritz C."/>
            <person name="Goffeau A."/>
            <person name="Hall J."/>
            <person name="Hebling U."/>
            <person name="Heumann K."/>
            <person name="Hilbert H."/>
            <person name="Hillier L.W."/>
            <person name="Hunicke-Smith S."/>
            <person name="Hyman R.W."/>
            <person name="Johnston M."/>
            <person name="Kalman S."/>
            <person name="Kleine K."/>
            <person name="Komp C."/>
            <person name="Kurdi O."/>
            <person name="Lashkari D."/>
            <person name="Lew H."/>
            <person name="Lin A."/>
            <person name="Lin D."/>
            <person name="Louis E.J."/>
            <person name="Marathe R."/>
            <person name="Messenguy F."/>
            <person name="Mewes H.-W."/>
            <person name="Mirtipati S."/>
            <person name="Moestl D."/>
            <person name="Mueller-Auer S."/>
            <person name="Namath A."/>
            <person name="Nentwich U."/>
            <person name="Oefner P."/>
            <person name="Pearson D."/>
            <person name="Petel F.X."/>
            <person name="Pohl T.M."/>
            <person name="Purnelle B."/>
            <person name="Rajandream M.A."/>
            <person name="Rechmann S."/>
            <person name="Rieger M."/>
            <person name="Riles L."/>
            <person name="Roberts D."/>
            <person name="Schaefer M."/>
            <person name="Scharfe M."/>
            <person name="Scherens B."/>
            <person name="Schramm S."/>
            <person name="Schroeder M."/>
            <person name="Sdicu A.-M."/>
            <person name="Tettelin H."/>
            <person name="Urrestarazu L.A."/>
            <person name="Ushinsky S."/>
            <person name="Vierendeels F."/>
            <person name="Vissers S."/>
            <person name="Voss H."/>
            <person name="Walsh S.V."/>
            <person name="Wambutt R."/>
            <person name="Wang Y."/>
            <person name="Wedler E."/>
            <person name="Wedler H."/>
            <person name="Winnett E."/>
            <person name="Zhong W.-W."/>
            <person name="Zollner A."/>
            <person name="Vo D.H."/>
            <person name="Hani J."/>
        </authorList>
    </citation>
    <scope>NUCLEOTIDE SEQUENCE [LARGE SCALE GENOMIC DNA]</scope>
    <source>
        <strain>ATCC 204508 / S288c</strain>
    </source>
</reference>
<reference key="2">
    <citation type="journal article" date="2014" name="G3 (Bethesda)">
        <title>The reference genome sequence of Saccharomyces cerevisiae: Then and now.</title>
        <authorList>
            <person name="Engel S.R."/>
            <person name="Dietrich F.S."/>
            <person name="Fisk D.G."/>
            <person name="Binkley G."/>
            <person name="Balakrishnan R."/>
            <person name="Costanzo M.C."/>
            <person name="Dwight S.S."/>
            <person name="Hitz B.C."/>
            <person name="Karra K."/>
            <person name="Nash R.S."/>
            <person name="Weng S."/>
            <person name="Wong E.D."/>
            <person name="Lloyd P."/>
            <person name="Skrzypek M.S."/>
            <person name="Miyasato S.R."/>
            <person name="Simison M."/>
            <person name="Cherry J.M."/>
        </authorList>
    </citation>
    <scope>GENOME REANNOTATION</scope>
    <source>
        <strain>ATCC 204508 / S288c</strain>
    </source>
</reference>
<reference key="3">
    <citation type="journal article" date="2005" name="Mol. Cell. Proteomics">
        <title>Quantitative phosphoproteomics applied to the yeast pheromone signaling pathway.</title>
        <authorList>
            <person name="Gruhler A."/>
            <person name="Olsen J.V."/>
            <person name="Mohammed S."/>
            <person name="Mortensen P."/>
            <person name="Faergeman N.J."/>
            <person name="Mann M."/>
            <person name="Jensen O.N."/>
        </authorList>
    </citation>
    <scope>PHOSPHORYLATION [LARGE SCALE ANALYSIS] AT SER-771</scope>
    <scope>IDENTIFICATION BY MASS SPECTROMETRY [LARGE SCALE ANALYSIS]</scope>
    <source>
        <strain>YAL6B</strain>
    </source>
</reference>
<reference key="4">
    <citation type="journal article" date="2006" name="J. Biol. Chem.">
        <title>A screen for genes of heme uptake identifies the FLC family required for import of FAD into the endoplasmic reticulum.</title>
        <authorList>
            <person name="Protchenko O."/>
            <person name="Rodriguez-Suarez R."/>
            <person name="Androphy R."/>
            <person name="Bussey H."/>
            <person name="Philpott C.C."/>
        </authorList>
    </citation>
    <scope>FUNCTION</scope>
    <scope>SUBCELLULAR LOCATION</scope>
</reference>
<reference key="5">
    <citation type="journal article" date="2006" name="Proc. Natl. Acad. Sci. U.S.A.">
        <title>A global topology map of the Saccharomyces cerevisiae membrane proteome.</title>
        <authorList>
            <person name="Kim H."/>
            <person name="Melen K."/>
            <person name="Oesterberg M."/>
            <person name="von Heijne G."/>
        </authorList>
    </citation>
    <scope>TOPOLOGY [LARGE SCALE ANALYSIS]</scope>
    <source>
        <strain>ATCC 208353 / W303-1A</strain>
    </source>
</reference>
<reference key="6">
    <citation type="journal article" date="2007" name="J. Proteome Res.">
        <title>Large-scale phosphorylation analysis of alpha-factor-arrested Saccharomyces cerevisiae.</title>
        <authorList>
            <person name="Li X."/>
            <person name="Gerber S.A."/>
            <person name="Rudner A.D."/>
            <person name="Beausoleil S.A."/>
            <person name="Haas W."/>
            <person name="Villen J."/>
            <person name="Elias J.E."/>
            <person name="Gygi S.P."/>
        </authorList>
    </citation>
    <scope>PHOSPHORYLATION [LARGE SCALE ANALYSIS] AT SER-771</scope>
    <scope>IDENTIFICATION BY MASS SPECTROMETRY [LARGE SCALE ANALYSIS]</scope>
    <source>
        <strain>ADR376</strain>
    </source>
</reference>
<reference key="7">
    <citation type="journal article" date="2008" name="Mol. Cell. Proteomics">
        <title>A multidimensional chromatography technology for in-depth phosphoproteome analysis.</title>
        <authorList>
            <person name="Albuquerque C.P."/>
            <person name="Smolka M.B."/>
            <person name="Payne S.H."/>
            <person name="Bafna V."/>
            <person name="Eng J."/>
            <person name="Zhou H."/>
        </authorList>
    </citation>
    <scope>IDENTIFICATION BY MASS SPECTROMETRY [LARGE SCALE ANALYSIS]</scope>
</reference>
<reference key="8">
    <citation type="journal article" date="2009" name="Science">
        <title>Global analysis of Cdk1 substrate phosphorylation sites provides insights into evolution.</title>
        <authorList>
            <person name="Holt L.J."/>
            <person name="Tuch B.B."/>
            <person name="Villen J."/>
            <person name="Johnson A.D."/>
            <person name="Gygi S.P."/>
            <person name="Morgan D.O."/>
        </authorList>
    </citation>
    <scope>PHOSPHORYLATION [LARGE SCALE ANALYSIS] AT THR-626; SER-771 AND SER-774</scope>
    <scope>IDENTIFICATION BY MASS SPECTROMETRY [LARGE SCALE ANALYSIS]</scope>
</reference>
<dbReference type="EMBL" id="Z73577">
    <property type="protein sequence ID" value="CAA97936.1"/>
    <property type="molecule type" value="Genomic_DNA"/>
</dbReference>
<dbReference type="EMBL" id="BK006949">
    <property type="protein sequence ID" value="DAA11215.1"/>
    <property type="molecule type" value="Genomic_DNA"/>
</dbReference>
<dbReference type="PIR" id="S65240">
    <property type="entry name" value="S65240"/>
</dbReference>
<dbReference type="RefSeq" id="NP_015103.1">
    <property type="nucleotide sequence ID" value="NM_001184035.1"/>
</dbReference>
<dbReference type="BioGRID" id="35964">
    <property type="interactions" value="77"/>
</dbReference>
<dbReference type="DIP" id="DIP-3965N"/>
<dbReference type="FunCoup" id="Q08967">
    <property type="interactions" value="85"/>
</dbReference>
<dbReference type="IntAct" id="Q08967">
    <property type="interactions" value="39"/>
</dbReference>
<dbReference type="MINT" id="Q08967"/>
<dbReference type="STRING" id="4932.YPL221W"/>
<dbReference type="TCDB" id="1.A.131.1.1">
    <property type="family name" value="the putative trp-like channel (p-trpl-ch) family"/>
</dbReference>
<dbReference type="GlyCosmos" id="Q08967">
    <property type="glycosylation" value="2 sites, No reported glycans"/>
</dbReference>
<dbReference type="GlyGen" id="Q08967">
    <property type="glycosylation" value="2 sites"/>
</dbReference>
<dbReference type="iPTMnet" id="Q08967"/>
<dbReference type="PaxDb" id="4932-YPL221W"/>
<dbReference type="PeptideAtlas" id="Q08967"/>
<dbReference type="EnsemblFungi" id="YPL221W_mRNA">
    <property type="protein sequence ID" value="YPL221W"/>
    <property type="gene ID" value="YPL221W"/>
</dbReference>
<dbReference type="GeneID" id="855880"/>
<dbReference type="KEGG" id="sce:YPL221W"/>
<dbReference type="AGR" id="SGD:S000006142"/>
<dbReference type="SGD" id="S000006142">
    <property type="gene designation" value="FLC1"/>
</dbReference>
<dbReference type="VEuPathDB" id="FungiDB:YPL221W"/>
<dbReference type="eggNOG" id="ENOG502QSVZ">
    <property type="taxonomic scope" value="Eukaryota"/>
</dbReference>
<dbReference type="GeneTree" id="ENSGT00940000176312"/>
<dbReference type="HOGENOM" id="CLU_010226_0_0_1"/>
<dbReference type="InParanoid" id="Q08967"/>
<dbReference type="OMA" id="FKVFQRA"/>
<dbReference type="OrthoDB" id="5212126at2759"/>
<dbReference type="BioCyc" id="YEAST:G3O-34110-MONOMER"/>
<dbReference type="BioGRID-ORCS" id="855880">
    <property type="hits" value="1 hit in 10 CRISPR screens"/>
</dbReference>
<dbReference type="PRO" id="PR:Q08967"/>
<dbReference type="Proteomes" id="UP000002311">
    <property type="component" value="Chromosome XVI"/>
</dbReference>
<dbReference type="RNAct" id="Q08967">
    <property type="molecule type" value="protein"/>
</dbReference>
<dbReference type="GO" id="GO:0005935">
    <property type="term" value="C:cellular bud neck"/>
    <property type="evidence" value="ECO:0007005"/>
    <property type="project" value="SGD"/>
</dbReference>
<dbReference type="GO" id="GO:0005783">
    <property type="term" value="C:endoplasmic reticulum"/>
    <property type="evidence" value="ECO:0000314"/>
    <property type="project" value="SGD"/>
</dbReference>
<dbReference type="GO" id="GO:0005789">
    <property type="term" value="C:endoplasmic reticulum membrane"/>
    <property type="evidence" value="ECO:0007669"/>
    <property type="project" value="UniProtKB-SubCell"/>
</dbReference>
<dbReference type="GO" id="GO:0000324">
    <property type="term" value="C:fungal-type vacuole"/>
    <property type="evidence" value="ECO:0007005"/>
    <property type="project" value="SGD"/>
</dbReference>
<dbReference type="GO" id="GO:0016020">
    <property type="term" value="C:membrane"/>
    <property type="evidence" value="ECO:0000318"/>
    <property type="project" value="GO_Central"/>
</dbReference>
<dbReference type="GO" id="GO:0015230">
    <property type="term" value="F:FAD transmembrane transporter activity"/>
    <property type="evidence" value="ECO:0000315"/>
    <property type="project" value="SGD"/>
</dbReference>
<dbReference type="GO" id="GO:0015883">
    <property type="term" value="P:FAD transport"/>
    <property type="evidence" value="ECO:0000315"/>
    <property type="project" value="SGD"/>
</dbReference>
<dbReference type="GO" id="GO:0009272">
    <property type="term" value="P:fungal-type cell wall biogenesis"/>
    <property type="evidence" value="ECO:0000315"/>
    <property type="project" value="SGD"/>
</dbReference>
<dbReference type="GO" id="GO:0006457">
    <property type="term" value="P:protein folding"/>
    <property type="evidence" value="ECO:0000315"/>
    <property type="project" value="SGD"/>
</dbReference>
<dbReference type="GO" id="GO:0030148">
    <property type="term" value="P:sphingolipid biosynthetic process"/>
    <property type="evidence" value="ECO:0000316"/>
    <property type="project" value="SGD"/>
</dbReference>
<dbReference type="GO" id="GO:0055085">
    <property type="term" value="P:transmembrane transport"/>
    <property type="evidence" value="ECO:0000318"/>
    <property type="project" value="GO_Central"/>
</dbReference>
<dbReference type="CDD" id="cd00912">
    <property type="entry name" value="ML"/>
    <property type="match status" value="1"/>
</dbReference>
<dbReference type="InterPro" id="IPR010308">
    <property type="entry name" value="TRP_C"/>
</dbReference>
<dbReference type="InterPro" id="IPR040241">
    <property type="entry name" value="TRP_Flc/Pkd2-like"/>
</dbReference>
<dbReference type="InterPro" id="IPR032800">
    <property type="entry name" value="TRP_N"/>
</dbReference>
<dbReference type="PANTHER" id="PTHR31145:SF4">
    <property type="entry name" value="FLAVIN CARRIER PROTEIN 1-RELATED"/>
    <property type="match status" value="1"/>
</dbReference>
<dbReference type="PANTHER" id="PTHR31145">
    <property type="entry name" value="INTEGRAL MEMBRANE PROTEIN (AFU_ORTHOLOGUE AFUA_7G01610)"/>
    <property type="match status" value="1"/>
</dbReference>
<dbReference type="Pfam" id="PF06011">
    <property type="entry name" value="TRP"/>
    <property type="match status" value="1"/>
</dbReference>
<dbReference type="Pfam" id="PF14558">
    <property type="entry name" value="TRP_N"/>
    <property type="match status" value="1"/>
</dbReference>
<dbReference type="SMART" id="SM01320">
    <property type="entry name" value="TRP_N"/>
    <property type="match status" value="1"/>
</dbReference>
<comment type="function">
    <text evidence="4">May be responsible for the transport of FAD into the endoplasmic reticulum lumen, where it is required for oxidative protein folding.</text>
</comment>
<comment type="subcellular location">
    <subcellularLocation>
        <location evidence="4">Endoplasmic reticulum membrane</location>
        <topology evidence="4">Multi-pass membrane protein</topology>
    </subcellularLocation>
</comment>
<comment type="similarity">
    <text evidence="5">Belongs to the transient receptor potential (TRP) ion channel family.</text>
</comment>